<organism>
    <name type="scientific">Bacteroides thetaiotaomicron (strain ATCC 29148 / DSM 2079 / JCM 5827 / CCUG 10774 / NCTC 10582 / VPI-5482 / E50)</name>
    <dbReference type="NCBI Taxonomy" id="226186"/>
    <lineage>
        <taxon>Bacteria</taxon>
        <taxon>Pseudomonadati</taxon>
        <taxon>Bacteroidota</taxon>
        <taxon>Bacteroidia</taxon>
        <taxon>Bacteroidales</taxon>
        <taxon>Bacteroidaceae</taxon>
        <taxon>Bacteroides</taxon>
    </lineage>
</organism>
<keyword id="KW-0002">3D-structure</keyword>
<keyword id="KW-0028">Amino-acid biosynthesis</keyword>
<keyword id="KW-0057">Aromatic amino acid biosynthesis</keyword>
<keyword id="KW-0067">ATP-binding</keyword>
<keyword id="KW-0963">Cytoplasm</keyword>
<keyword id="KW-0418">Kinase</keyword>
<keyword id="KW-0460">Magnesium</keyword>
<keyword id="KW-0479">Metal-binding</keyword>
<keyword id="KW-0547">Nucleotide-binding</keyword>
<keyword id="KW-1185">Reference proteome</keyword>
<keyword id="KW-0808">Transferase</keyword>
<dbReference type="EC" id="2.7.1.71" evidence="1"/>
<dbReference type="EMBL" id="AE015928">
    <property type="protein sequence ID" value="AAO78499.1"/>
    <property type="molecule type" value="Genomic_DNA"/>
</dbReference>
<dbReference type="RefSeq" id="NP_812305.1">
    <property type="nucleotide sequence ID" value="NC_004663.1"/>
</dbReference>
<dbReference type="RefSeq" id="WP_008767597.1">
    <property type="nucleotide sequence ID" value="NC_004663.1"/>
</dbReference>
<dbReference type="PDB" id="3VAA">
    <property type="method" value="X-ray"/>
    <property type="resolution" value="1.70 A"/>
    <property type="chains" value="A/B/C=1-175"/>
</dbReference>
<dbReference type="PDBsum" id="3VAA"/>
<dbReference type="SMR" id="Q8A2B2"/>
<dbReference type="FunCoup" id="Q8A2B2">
    <property type="interactions" value="115"/>
</dbReference>
<dbReference type="STRING" id="226186.BT_3393"/>
<dbReference type="PaxDb" id="226186-BT_3393"/>
<dbReference type="EnsemblBacteria" id="AAO78499">
    <property type="protein sequence ID" value="AAO78499"/>
    <property type="gene ID" value="BT_3393"/>
</dbReference>
<dbReference type="GeneID" id="60924572"/>
<dbReference type="KEGG" id="bth:BT_3393"/>
<dbReference type="PATRIC" id="fig|226186.12.peg.3461"/>
<dbReference type="eggNOG" id="COG0703">
    <property type="taxonomic scope" value="Bacteria"/>
</dbReference>
<dbReference type="HOGENOM" id="CLU_057607_4_0_10"/>
<dbReference type="InParanoid" id="Q8A2B2"/>
<dbReference type="OrthoDB" id="9800332at2"/>
<dbReference type="UniPathway" id="UPA00053">
    <property type="reaction ID" value="UER00088"/>
</dbReference>
<dbReference type="EvolutionaryTrace" id="Q8A2B2"/>
<dbReference type="Proteomes" id="UP000001414">
    <property type="component" value="Chromosome"/>
</dbReference>
<dbReference type="GO" id="GO:0005829">
    <property type="term" value="C:cytosol"/>
    <property type="evidence" value="ECO:0000318"/>
    <property type="project" value="GO_Central"/>
</dbReference>
<dbReference type="GO" id="GO:0005524">
    <property type="term" value="F:ATP binding"/>
    <property type="evidence" value="ECO:0007669"/>
    <property type="project" value="UniProtKB-UniRule"/>
</dbReference>
<dbReference type="GO" id="GO:0000287">
    <property type="term" value="F:magnesium ion binding"/>
    <property type="evidence" value="ECO:0007669"/>
    <property type="project" value="UniProtKB-UniRule"/>
</dbReference>
<dbReference type="GO" id="GO:0004765">
    <property type="term" value="F:shikimate kinase activity"/>
    <property type="evidence" value="ECO:0000318"/>
    <property type="project" value="GO_Central"/>
</dbReference>
<dbReference type="GO" id="GO:0008652">
    <property type="term" value="P:amino acid biosynthetic process"/>
    <property type="evidence" value="ECO:0007669"/>
    <property type="project" value="UniProtKB-KW"/>
</dbReference>
<dbReference type="GO" id="GO:0009073">
    <property type="term" value="P:aromatic amino acid family biosynthetic process"/>
    <property type="evidence" value="ECO:0007669"/>
    <property type="project" value="UniProtKB-KW"/>
</dbReference>
<dbReference type="GO" id="GO:0009423">
    <property type="term" value="P:chorismate biosynthetic process"/>
    <property type="evidence" value="ECO:0007669"/>
    <property type="project" value="UniProtKB-UniRule"/>
</dbReference>
<dbReference type="CDD" id="cd00464">
    <property type="entry name" value="SK"/>
    <property type="match status" value="1"/>
</dbReference>
<dbReference type="FunFam" id="3.40.50.300:FF:002914">
    <property type="entry name" value="Shikimate kinase"/>
    <property type="match status" value="1"/>
</dbReference>
<dbReference type="Gene3D" id="3.40.50.300">
    <property type="entry name" value="P-loop containing nucleotide triphosphate hydrolases"/>
    <property type="match status" value="1"/>
</dbReference>
<dbReference type="HAMAP" id="MF_00109">
    <property type="entry name" value="Shikimate_kinase"/>
    <property type="match status" value="1"/>
</dbReference>
<dbReference type="InterPro" id="IPR027417">
    <property type="entry name" value="P-loop_NTPase"/>
</dbReference>
<dbReference type="InterPro" id="IPR031322">
    <property type="entry name" value="Shikimate/glucono_kinase"/>
</dbReference>
<dbReference type="InterPro" id="IPR000623">
    <property type="entry name" value="Shikimate_kinase/TSH1"/>
</dbReference>
<dbReference type="NCBIfam" id="NF010555">
    <property type="entry name" value="PRK13949.1"/>
    <property type="match status" value="1"/>
</dbReference>
<dbReference type="PANTHER" id="PTHR21087">
    <property type="entry name" value="SHIKIMATE KINASE"/>
    <property type="match status" value="1"/>
</dbReference>
<dbReference type="PANTHER" id="PTHR21087:SF16">
    <property type="entry name" value="SHIKIMATE KINASE 1, CHLOROPLASTIC"/>
    <property type="match status" value="1"/>
</dbReference>
<dbReference type="Pfam" id="PF01202">
    <property type="entry name" value="SKI"/>
    <property type="match status" value="1"/>
</dbReference>
<dbReference type="PRINTS" id="PR01100">
    <property type="entry name" value="SHIKIMTKNASE"/>
</dbReference>
<dbReference type="SUPFAM" id="SSF52540">
    <property type="entry name" value="P-loop containing nucleoside triphosphate hydrolases"/>
    <property type="match status" value="1"/>
</dbReference>
<comment type="function">
    <text evidence="1">Catalyzes the specific phosphorylation of the 3-hydroxyl group of shikimic acid using ATP as a cosubstrate.</text>
</comment>
<comment type="catalytic activity">
    <reaction evidence="1">
        <text>shikimate + ATP = 3-phosphoshikimate + ADP + H(+)</text>
        <dbReference type="Rhea" id="RHEA:13121"/>
        <dbReference type="ChEBI" id="CHEBI:15378"/>
        <dbReference type="ChEBI" id="CHEBI:30616"/>
        <dbReference type="ChEBI" id="CHEBI:36208"/>
        <dbReference type="ChEBI" id="CHEBI:145989"/>
        <dbReference type="ChEBI" id="CHEBI:456216"/>
        <dbReference type="EC" id="2.7.1.71"/>
    </reaction>
</comment>
<comment type="cofactor">
    <cofactor evidence="1">
        <name>Mg(2+)</name>
        <dbReference type="ChEBI" id="CHEBI:18420"/>
    </cofactor>
    <text evidence="1">Binds 1 Mg(2+) ion per subunit.</text>
</comment>
<comment type="pathway">
    <text evidence="1">Metabolic intermediate biosynthesis; chorismate biosynthesis; chorismate from D-erythrose 4-phosphate and phosphoenolpyruvate: step 5/7.</text>
</comment>
<comment type="subunit">
    <text evidence="1">Monomer.</text>
</comment>
<comment type="subcellular location">
    <subcellularLocation>
        <location evidence="1">Cytoplasm</location>
    </subcellularLocation>
</comment>
<comment type="similarity">
    <text evidence="1">Belongs to the shikimate kinase family.</text>
</comment>
<feature type="chain" id="PRO_0000237844" description="Shikimate kinase">
    <location>
        <begin position="1"/>
        <end position="175"/>
    </location>
</feature>
<feature type="binding site" evidence="1">
    <location>
        <begin position="11"/>
        <end position="16"/>
    </location>
    <ligand>
        <name>ATP</name>
        <dbReference type="ChEBI" id="CHEBI:30616"/>
    </ligand>
</feature>
<feature type="binding site" evidence="1">
    <location>
        <position position="15"/>
    </location>
    <ligand>
        <name>Mg(2+)</name>
        <dbReference type="ChEBI" id="CHEBI:18420"/>
    </ligand>
</feature>
<feature type="binding site" evidence="1">
    <location>
        <position position="33"/>
    </location>
    <ligand>
        <name>substrate</name>
    </ligand>
</feature>
<feature type="binding site" evidence="1">
    <location>
        <position position="57"/>
    </location>
    <ligand>
        <name>substrate</name>
    </ligand>
</feature>
<feature type="binding site" evidence="1">
    <location>
        <position position="79"/>
    </location>
    <ligand>
        <name>substrate</name>
    </ligand>
</feature>
<feature type="binding site" evidence="1">
    <location>
        <position position="118"/>
    </location>
    <ligand>
        <name>ATP</name>
        <dbReference type="ChEBI" id="CHEBI:30616"/>
    </ligand>
</feature>
<feature type="binding site" evidence="1">
    <location>
        <position position="140"/>
    </location>
    <ligand>
        <name>substrate</name>
    </ligand>
</feature>
<feature type="strand" evidence="2">
    <location>
        <begin position="3"/>
        <end position="7"/>
    </location>
</feature>
<feature type="helix" evidence="2">
    <location>
        <begin position="14"/>
        <end position="25"/>
    </location>
</feature>
<feature type="strand" evidence="2">
    <location>
        <begin position="29"/>
        <end position="31"/>
    </location>
</feature>
<feature type="helix" evidence="2">
    <location>
        <begin position="32"/>
        <end position="40"/>
    </location>
</feature>
<feature type="helix" evidence="2">
    <location>
        <begin position="44"/>
        <end position="67"/>
    </location>
</feature>
<feature type="strand" evidence="2">
    <location>
        <begin position="71"/>
        <end position="76"/>
    </location>
</feature>
<feature type="helix" evidence="2">
    <location>
        <begin position="81"/>
        <end position="83"/>
    </location>
</feature>
<feature type="helix" evidence="2">
    <location>
        <begin position="87"/>
        <end position="94"/>
    </location>
</feature>
<feature type="strand" evidence="2">
    <location>
        <begin position="95"/>
        <end position="101"/>
    </location>
</feature>
<feature type="helix" evidence="2">
    <location>
        <begin position="104"/>
        <end position="113"/>
    </location>
</feature>
<feature type="helix" evidence="2">
    <location>
        <begin position="115"/>
        <end position="117"/>
    </location>
</feature>
<feature type="helix" evidence="2">
    <location>
        <begin position="119"/>
        <end position="121"/>
    </location>
</feature>
<feature type="helix" evidence="2">
    <location>
        <begin position="126"/>
        <end position="144"/>
    </location>
</feature>
<feature type="strand" evidence="2">
    <location>
        <begin position="147"/>
        <end position="152"/>
    </location>
</feature>
<feature type="helix" evidence="2">
    <location>
        <begin position="159"/>
        <end position="172"/>
    </location>
</feature>
<name>AROK_BACTN</name>
<reference key="1">
    <citation type="journal article" date="2003" name="Science">
        <title>A genomic view of the human-Bacteroides thetaiotaomicron symbiosis.</title>
        <authorList>
            <person name="Xu J."/>
            <person name="Bjursell M.K."/>
            <person name="Himrod J."/>
            <person name="Deng S."/>
            <person name="Carmichael L.K."/>
            <person name="Chiang H.C."/>
            <person name="Hooper L.V."/>
            <person name="Gordon J.I."/>
        </authorList>
    </citation>
    <scope>NUCLEOTIDE SEQUENCE [LARGE SCALE GENOMIC DNA]</scope>
    <source>
        <strain>ATCC 29148 / DSM 2079 / JCM 5827 / CCUG 10774 / NCTC 10582 / VPI-5482 / E50</strain>
    </source>
</reference>
<proteinExistence type="evidence at protein level"/>
<gene>
    <name evidence="1" type="primary">aroK</name>
    <name type="ordered locus">BT_3393</name>
</gene>
<protein>
    <recommendedName>
        <fullName evidence="1">Shikimate kinase</fullName>
        <shortName evidence="1">SK</shortName>
        <ecNumber evidence="1">2.7.1.71</ecNumber>
    </recommendedName>
</protein>
<evidence type="ECO:0000255" key="1">
    <source>
        <dbReference type="HAMAP-Rule" id="MF_00109"/>
    </source>
</evidence>
<evidence type="ECO:0007829" key="2">
    <source>
        <dbReference type="PDB" id="3VAA"/>
    </source>
</evidence>
<sequence>MVRIFLTGYMGAGKTTLGKAFARKLNVPFIDLDWYIEERFHKTVGELFTERGEAGFRELERNMLHEVAEFENVVISTGGGAPCFYDNMEFMNRTGKTVFLNVHPDVLFRRLRIAKQQRPILQGKEDDELMDFIIQALEKRAPFYTQAQYIFNADELEDRWQIESSVQRLQELLEL</sequence>
<accession>Q8A2B2</accession>